<comment type="function">
    <text evidence="1">Molecular chaperone. Has ATPase activity.</text>
</comment>
<comment type="subunit">
    <text evidence="1">Homodimer.</text>
</comment>
<comment type="subcellular location">
    <subcellularLocation>
        <location evidence="1">Cytoplasm</location>
    </subcellularLocation>
</comment>
<comment type="similarity">
    <text evidence="1">Belongs to the heat shock protein 90 family.</text>
</comment>
<sequence>MTQQTMSFQAEVKQLLHLMIHSLYSNKEIFLRELVSNASDAADKLRFEALENNALYESDPNLRIRLSFDKAARTITIDDNGIGMSRDEAIANLGTIARSGTKEFFSKLSGDQQKDAALIGQFGVGFYSGFIVADRITVETRRAGLPASEGVRWESAGEGDFQVDTIERAARGTTITLHLREGEDELLSSYRLKSIVQKYSDHVALPILMKKEEWDQEKGEMVEKDEDETINQASALWTRAKSEVTDEQYKQFYQHVAHDHQDPLAWTHNRVEGRSEYTQLLFVPSHAPFDLWNRDYRGGLKLYVKRVFIMDDAEQLLPQYLRFIKGVVDSSDLPLNVSREILQESRDVKAIREGVTKRALSMLEELANAEDDAGKEKYKTFWSAFGQVLKEGVGEDHANRERVAKLLRFASTHGDTDAQDVALADYVARMKPEQTKIYYVTADTWQAAKNSPHLEVFRKKGVEVLLLTDRVDEWMLSFLHEFDGKPLASVARGDLDLGALNDDEKKAQEETGEAMKPVVDKMKETLGEKVKDVRVTFRLTDSPSCLVADDNDMSGYLQRMLKAAGQSAPSFQPILEINPEHPLVKALKADGADFGDWCHLLFDQALLAEGGALEDPASFVKRTNALLLSRAA</sequence>
<gene>
    <name evidence="1" type="primary">htpG</name>
    <name type="ordered locus">BMA10247_0289</name>
</gene>
<keyword id="KW-0067">ATP-binding</keyword>
<keyword id="KW-0143">Chaperone</keyword>
<keyword id="KW-0963">Cytoplasm</keyword>
<keyword id="KW-0547">Nucleotide-binding</keyword>
<keyword id="KW-0346">Stress response</keyword>
<reference key="1">
    <citation type="journal article" date="2010" name="Genome Biol. Evol.">
        <title>Continuing evolution of Burkholderia mallei through genome reduction and large-scale rearrangements.</title>
        <authorList>
            <person name="Losada L."/>
            <person name="Ronning C.M."/>
            <person name="DeShazer D."/>
            <person name="Woods D."/>
            <person name="Fedorova N."/>
            <person name="Kim H.S."/>
            <person name="Shabalina S.A."/>
            <person name="Pearson T.R."/>
            <person name="Brinkac L."/>
            <person name="Tan P."/>
            <person name="Nandi T."/>
            <person name="Crabtree J."/>
            <person name="Badger J."/>
            <person name="Beckstrom-Sternberg S."/>
            <person name="Saqib M."/>
            <person name="Schutzer S.E."/>
            <person name="Keim P."/>
            <person name="Nierman W.C."/>
        </authorList>
    </citation>
    <scope>NUCLEOTIDE SEQUENCE [LARGE SCALE GENOMIC DNA]</scope>
    <source>
        <strain>NCTC 10247</strain>
    </source>
</reference>
<protein>
    <recommendedName>
        <fullName evidence="1">Chaperone protein HtpG</fullName>
    </recommendedName>
    <alternativeName>
        <fullName evidence="1">Heat shock protein HtpG</fullName>
    </alternativeName>
    <alternativeName>
        <fullName evidence="1">High temperature protein G</fullName>
    </alternativeName>
</protein>
<organism>
    <name type="scientific">Burkholderia mallei (strain NCTC 10247)</name>
    <dbReference type="NCBI Taxonomy" id="320389"/>
    <lineage>
        <taxon>Bacteria</taxon>
        <taxon>Pseudomonadati</taxon>
        <taxon>Pseudomonadota</taxon>
        <taxon>Betaproteobacteria</taxon>
        <taxon>Burkholderiales</taxon>
        <taxon>Burkholderiaceae</taxon>
        <taxon>Burkholderia</taxon>
        <taxon>pseudomallei group</taxon>
    </lineage>
</organism>
<name>HTPG_BURM7</name>
<accession>A3MHX8</accession>
<evidence type="ECO:0000255" key="1">
    <source>
        <dbReference type="HAMAP-Rule" id="MF_00505"/>
    </source>
</evidence>
<dbReference type="EMBL" id="CP000548">
    <property type="protein sequence ID" value="ABO05662.1"/>
    <property type="molecule type" value="Genomic_DNA"/>
</dbReference>
<dbReference type="RefSeq" id="WP_004185742.1">
    <property type="nucleotide sequence ID" value="NZ_CP007802.1"/>
</dbReference>
<dbReference type="SMR" id="A3MHX8"/>
<dbReference type="GeneID" id="93059584"/>
<dbReference type="KEGG" id="bmaz:BM44_2707"/>
<dbReference type="KEGG" id="bmn:BMA10247_0289"/>
<dbReference type="PATRIC" id="fig|320389.8.peg.3060"/>
<dbReference type="GO" id="GO:0005737">
    <property type="term" value="C:cytoplasm"/>
    <property type="evidence" value="ECO:0007669"/>
    <property type="project" value="UniProtKB-SubCell"/>
</dbReference>
<dbReference type="GO" id="GO:0005524">
    <property type="term" value="F:ATP binding"/>
    <property type="evidence" value="ECO:0007669"/>
    <property type="project" value="UniProtKB-UniRule"/>
</dbReference>
<dbReference type="GO" id="GO:0016887">
    <property type="term" value="F:ATP hydrolysis activity"/>
    <property type="evidence" value="ECO:0007669"/>
    <property type="project" value="InterPro"/>
</dbReference>
<dbReference type="GO" id="GO:0140662">
    <property type="term" value="F:ATP-dependent protein folding chaperone"/>
    <property type="evidence" value="ECO:0007669"/>
    <property type="project" value="InterPro"/>
</dbReference>
<dbReference type="GO" id="GO:0051082">
    <property type="term" value="F:unfolded protein binding"/>
    <property type="evidence" value="ECO:0007669"/>
    <property type="project" value="UniProtKB-UniRule"/>
</dbReference>
<dbReference type="CDD" id="cd16927">
    <property type="entry name" value="HATPase_Hsp90-like"/>
    <property type="match status" value="1"/>
</dbReference>
<dbReference type="FunFam" id="3.30.230.80:FF:000002">
    <property type="entry name" value="Molecular chaperone HtpG"/>
    <property type="match status" value="1"/>
</dbReference>
<dbReference type="FunFam" id="3.30.565.10:FF:000009">
    <property type="entry name" value="Molecular chaperone HtpG"/>
    <property type="match status" value="1"/>
</dbReference>
<dbReference type="Gene3D" id="3.30.230.80">
    <property type="match status" value="1"/>
</dbReference>
<dbReference type="Gene3D" id="3.40.50.11260">
    <property type="match status" value="1"/>
</dbReference>
<dbReference type="Gene3D" id="1.20.120.790">
    <property type="entry name" value="Heat shock protein 90, C-terminal domain"/>
    <property type="match status" value="1"/>
</dbReference>
<dbReference type="Gene3D" id="3.30.565.10">
    <property type="entry name" value="Histidine kinase-like ATPase, C-terminal domain"/>
    <property type="match status" value="1"/>
</dbReference>
<dbReference type="HAMAP" id="MF_00505">
    <property type="entry name" value="HSP90"/>
    <property type="match status" value="1"/>
</dbReference>
<dbReference type="InterPro" id="IPR036890">
    <property type="entry name" value="HATPase_C_sf"/>
</dbReference>
<dbReference type="InterPro" id="IPR019805">
    <property type="entry name" value="Heat_shock_protein_90_CS"/>
</dbReference>
<dbReference type="InterPro" id="IPR037196">
    <property type="entry name" value="HSP90_C"/>
</dbReference>
<dbReference type="InterPro" id="IPR001404">
    <property type="entry name" value="Hsp90_fam"/>
</dbReference>
<dbReference type="InterPro" id="IPR020575">
    <property type="entry name" value="Hsp90_N"/>
</dbReference>
<dbReference type="InterPro" id="IPR020568">
    <property type="entry name" value="Ribosomal_Su5_D2-typ_SF"/>
</dbReference>
<dbReference type="NCBIfam" id="NF003555">
    <property type="entry name" value="PRK05218.1"/>
    <property type="match status" value="1"/>
</dbReference>
<dbReference type="PANTHER" id="PTHR11528">
    <property type="entry name" value="HEAT SHOCK PROTEIN 90 FAMILY MEMBER"/>
    <property type="match status" value="1"/>
</dbReference>
<dbReference type="Pfam" id="PF13589">
    <property type="entry name" value="HATPase_c_3"/>
    <property type="match status" value="1"/>
</dbReference>
<dbReference type="Pfam" id="PF00183">
    <property type="entry name" value="HSP90"/>
    <property type="match status" value="1"/>
</dbReference>
<dbReference type="PIRSF" id="PIRSF002583">
    <property type="entry name" value="Hsp90"/>
    <property type="match status" value="1"/>
</dbReference>
<dbReference type="PRINTS" id="PR00775">
    <property type="entry name" value="HEATSHOCK90"/>
</dbReference>
<dbReference type="SMART" id="SM00387">
    <property type="entry name" value="HATPase_c"/>
    <property type="match status" value="1"/>
</dbReference>
<dbReference type="SUPFAM" id="SSF55874">
    <property type="entry name" value="ATPase domain of HSP90 chaperone/DNA topoisomerase II/histidine kinase"/>
    <property type="match status" value="1"/>
</dbReference>
<dbReference type="SUPFAM" id="SSF110942">
    <property type="entry name" value="HSP90 C-terminal domain"/>
    <property type="match status" value="1"/>
</dbReference>
<dbReference type="SUPFAM" id="SSF54211">
    <property type="entry name" value="Ribosomal protein S5 domain 2-like"/>
    <property type="match status" value="1"/>
</dbReference>
<dbReference type="PROSITE" id="PS00298">
    <property type="entry name" value="HSP90"/>
    <property type="match status" value="1"/>
</dbReference>
<proteinExistence type="inferred from homology"/>
<feature type="chain" id="PRO_1000014901" description="Chaperone protein HtpG">
    <location>
        <begin position="1"/>
        <end position="632"/>
    </location>
</feature>
<feature type="region of interest" description="A; substrate-binding" evidence="1">
    <location>
        <begin position="1"/>
        <end position="339"/>
    </location>
</feature>
<feature type="region of interest" description="B" evidence="1">
    <location>
        <begin position="340"/>
        <end position="559"/>
    </location>
</feature>
<feature type="region of interest" description="C" evidence="1">
    <location>
        <begin position="560"/>
        <end position="632"/>
    </location>
</feature>